<organism>
    <name type="scientific">Pinus thunbergii</name>
    <name type="common">Japanese black pine</name>
    <name type="synonym">Pinus thunbergiana</name>
    <dbReference type="NCBI Taxonomy" id="3350"/>
    <lineage>
        <taxon>Eukaryota</taxon>
        <taxon>Viridiplantae</taxon>
        <taxon>Streptophyta</taxon>
        <taxon>Embryophyta</taxon>
        <taxon>Tracheophyta</taxon>
        <taxon>Spermatophyta</taxon>
        <taxon>Pinopsida</taxon>
        <taxon>Pinidae</taxon>
        <taxon>Conifers I</taxon>
        <taxon>Pinales</taxon>
        <taxon>Pinaceae</taxon>
        <taxon>Pinus</taxon>
        <taxon>Pinus subgen. Pinus</taxon>
    </lineage>
</organism>
<keyword id="KW-0150">Chloroplast</keyword>
<keyword id="KW-0934">Plastid</keyword>
<keyword id="KW-0687">Ribonucleoprotein</keyword>
<keyword id="KW-0689">Ribosomal protein</keyword>
<evidence type="ECO:0000250" key="1"/>
<evidence type="ECO:0000305" key="2"/>
<comment type="subunit">
    <text evidence="1">Part of the 30S ribosomal subunit.</text>
</comment>
<comment type="subcellular location">
    <subcellularLocation>
        <location>Plastid</location>
        <location>Chloroplast</location>
    </subcellularLocation>
</comment>
<comment type="similarity">
    <text evidence="2">Belongs to the universal ribosomal protein uS15 family.</text>
</comment>
<protein>
    <recommendedName>
        <fullName evidence="2">Small ribosomal subunit protein uS15c</fullName>
    </recommendedName>
    <alternativeName>
        <fullName>30S ribosomal protein S15, chloroplastic</fullName>
    </alternativeName>
</protein>
<reference key="1">
    <citation type="journal article" date="1994" name="Proc. Natl. Acad. Sci. U.S.A.">
        <title>Loss of all ndh genes as determined by sequencing the entire chloroplast genome of the black pine Pinus thunbergii.</title>
        <authorList>
            <person name="Wakasugi T."/>
            <person name="Tsudzuki J."/>
            <person name="Ito S."/>
            <person name="Nakashima K."/>
            <person name="Tsudzuki T."/>
            <person name="Sugiura M."/>
        </authorList>
    </citation>
    <scope>NUCLEOTIDE SEQUENCE [LARGE SCALE GENOMIC DNA]</scope>
</reference>
<proteinExistence type="inferred from homology"/>
<accession>P41648</accession>
<sequence length="88" mass="10312">MINNLSISSSLIPDKQRGSVESQVFYLTNRVLRLTQHLQLHGRDYSSQRGLWKILSKRKQLLVYLSKRDKLRYDDLIGQLGIRGLKTR</sequence>
<name>RR15_PINTH</name>
<dbReference type="EMBL" id="D17510">
    <property type="protein sequence ID" value="BAA04444.1"/>
    <property type="molecule type" value="Genomic_DNA"/>
</dbReference>
<dbReference type="PIR" id="T07568">
    <property type="entry name" value="T07568"/>
</dbReference>
<dbReference type="RefSeq" id="NP_042489.1">
    <property type="nucleotide sequence ID" value="NC_001631.1"/>
</dbReference>
<dbReference type="SMR" id="P41648"/>
<dbReference type="GeneID" id="809088"/>
<dbReference type="GO" id="GO:0009507">
    <property type="term" value="C:chloroplast"/>
    <property type="evidence" value="ECO:0007669"/>
    <property type="project" value="UniProtKB-SubCell"/>
</dbReference>
<dbReference type="GO" id="GO:1990904">
    <property type="term" value="C:ribonucleoprotein complex"/>
    <property type="evidence" value="ECO:0007669"/>
    <property type="project" value="UniProtKB-KW"/>
</dbReference>
<dbReference type="GO" id="GO:0005840">
    <property type="term" value="C:ribosome"/>
    <property type="evidence" value="ECO:0007669"/>
    <property type="project" value="UniProtKB-KW"/>
</dbReference>
<dbReference type="GO" id="GO:0003735">
    <property type="term" value="F:structural constituent of ribosome"/>
    <property type="evidence" value="ECO:0007669"/>
    <property type="project" value="InterPro"/>
</dbReference>
<dbReference type="GO" id="GO:0006412">
    <property type="term" value="P:translation"/>
    <property type="evidence" value="ECO:0007669"/>
    <property type="project" value="UniProtKB-UniRule"/>
</dbReference>
<dbReference type="CDD" id="cd00677">
    <property type="entry name" value="S15_NS1_EPRS_RNA-bind"/>
    <property type="match status" value="1"/>
</dbReference>
<dbReference type="Gene3D" id="1.10.287.10">
    <property type="entry name" value="S15/NS1, RNA-binding"/>
    <property type="match status" value="1"/>
</dbReference>
<dbReference type="HAMAP" id="MF_01343_B">
    <property type="entry name" value="Ribosomal_uS15_B"/>
    <property type="match status" value="1"/>
</dbReference>
<dbReference type="InterPro" id="IPR000589">
    <property type="entry name" value="Ribosomal_uS15"/>
</dbReference>
<dbReference type="InterPro" id="IPR005290">
    <property type="entry name" value="Ribosomal_uS15_bac-type"/>
</dbReference>
<dbReference type="InterPro" id="IPR009068">
    <property type="entry name" value="uS15_NS1_RNA-bd_sf"/>
</dbReference>
<dbReference type="NCBIfam" id="TIGR00952">
    <property type="entry name" value="S15_bact"/>
    <property type="match status" value="1"/>
</dbReference>
<dbReference type="PANTHER" id="PTHR23321">
    <property type="entry name" value="RIBOSOMAL PROTEIN S15, BACTERIAL AND ORGANELLAR"/>
    <property type="match status" value="1"/>
</dbReference>
<dbReference type="PANTHER" id="PTHR23321:SF26">
    <property type="entry name" value="SMALL RIBOSOMAL SUBUNIT PROTEIN US15M"/>
    <property type="match status" value="1"/>
</dbReference>
<dbReference type="Pfam" id="PF00312">
    <property type="entry name" value="Ribosomal_S15"/>
    <property type="match status" value="1"/>
</dbReference>
<dbReference type="SMART" id="SM01387">
    <property type="entry name" value="Ribosomal_S15"/>
    <property type="match status" value="1"/>
</dbReference>
<dbReference type="SUPFAM" id="SSF47060">
    <property type="entry name" value="S15/NS1 RNA-binding domain"/>
    <property type="match status" value="1"/>
</dbReference>
<dbReference type="PROSITE" id="PS00362">
    <property type="entry name" value="RIBOSOMAL_S15"/>
    <property type="match status" value="1"/>
</dbReference>
<gene>
    <name type="primary">rps15</name>
</gene>
<geneLocation type="chloroplast"/>
<feature type="chain" id="PRO_0000115648" description="Small ribosomal subunit protein uS15c">
    <location>
        <begin position="1"/>
        <end position="88"/>
    </location>
</feature>